<keyword id="KW-0963">Cytoplasm</keyword>
<keyword id="KW-0312">Gluconeogenesis</keyword>
<keyword id="KW-0324">Glycolysis</keyword>
<keyword id="KW-0413">Isomerase</keyword>
<keyword id="KW-1185">Reference proteome</keyword>
<accession>A9BAE3</accession>
<sequence>MNLPDYSPNNSSLQWERFSELLWHNEELGLWVDISRMNVNEHELKELKPIFQKAFEAMNSLEKGSMANIDEERMVGHYWLRNPDLAPSRDISKLIANQISQIEQFTTSILSGDIRSDAGELFTDVLWIGIGGSGLGPLLLIESLQELNKGLKFHFLDNVDPIGIDKKLELLQSKLSTTLFVVVSKSGGTPEPQIAMDQARHVVETNGKNWPTRSVAITMCNSLLDNKAKQENWLKTFDLPDWVGGRTSITGAVGLLPLGLIDSDLKSFLLGASKMDELTRNNELLDNPAALMAMAWYSSGSAKGLKDMVVLPYRDSLEVFSRYLQQLVMESLGKKNDREGNIVFQGLSVYGNKGSTDQHAYVQQLRDGINNFFVTFIEVLTNNESPCLNNKLPGDYLSGFMQGTRLALSDSNRQSLTITLKTFDPLSLGALIALFERTVGLYAELININAYHQPGVEAGKKAAADILNLQLQIEDILSDYSNYSIEQISTRLSSSNSESIYFILRNLVFNNKYSAKGSWKNPSSLIFKREKL</sequence>
<organism>
    <name type="scientific">Prochlorococcus marinus (strain MIT 9211)</name>
    <dbReference type="NCBI Taxonomy" id="93059"/>
    <lineage>
        <taxon>Bacteria</taxon>
        <taxon>Bacillati</taxon>
        <taxon>Cyanobacteriota</taxon>
        <taxon>Cyanophyceae</taxon>
        <taxon>Synechococcales</taxon>
        <taxon>Prochlorococcaceae</taxon>
        <taxon>Prochlorococcus</taxon>
    </lineage>
</organism>
<proteinExistence type="inferred from homology"/>
<dbReference type="EC" id="5.3.1.9" evidence="1"/>
<dbReference type="EMBL" id="CP000878">
    <property type="protein sequence ID" value="ABX08805.1"/>
    <property type="molecule type" value="Genomic_DNA"/>
</dbReference>
<dbReference type="RefSeq" id="WP_012195427.1">
    <property type="nucleotide sequence ID" value="NC_009976.1"/>
</dbReference>
<dbReference type="SMR" id="A9BAE3"/>
<dbReference type="STRING" id="93059.P9211_08741"/>
<dbReference type="KEGG" id="pmj:P9211_08741"/>
<dbReference type="eggNOG" id="COG0166">
    <property type="taxonomic scope" value="Bacteria"/>
</dbReference>
<dbReference type="HOGENOM" id="CLU_033288_0_0_3"/>
<dbReference type="OrthoDB" id="140919at2"/>
<dbReference type="UniPathway" id="UPA00109">
    <property type="reaction ID" value="UER00181"/>
</dbReference>
<dbReference type="UniPathway" id="UPA00138"/>
<dbReference type="Proteomes" id="UP000000788">
    <property type="component" value="Chromosome"/>
</dbReference>
<dbReference type="GO" id="GO:0005829">
    <property type="term" value="C:cytosol"/>
    <property type="evidence" value="ECO:0007669"/>
    <property type="project" value="TreeGrafter"/>
</dbReference>
<dbReference type="GO" id="GO:0097367">
    <property type="term" value="F:carbohydrate derivative binding"/>
    <property type="evidence" value="ECO:0007669"/>
    <property type="project" value="InterPro"/>
</dbReference>
<dbReference type="GO" id="GO:0004347">
    <property type="term" value="F:glucose-6-phosphate isomerase activity"/>
    <property type="evidence" value="ECO:0007669"/>
    <property type="project" value="UniProtKB-UniRule"/>
</dbReference>
<dbReference type="GO" id="GO:0048029">
    <property type="term" value="F:monosaccharide binding"/>
    <property type="evidence" value="ECO:0007669"/>
    <property type="project" value="TreeGrafter"/>
</dbReference>
<dbReference type="GO" id="GO:0006094">
    <property type="term" value="P:gluconeogenesis"/>
    <property type="evidence" value="ECO:0007669"/>
    <property type="project" value="UniProtKB-UniRule"/>
</dbReference>
<dbReference type="GO" id="GO:0051156">
    <property type="term" value="P:glucose 6-phosphate metabolic process"/>
    <property type="evidence" value="ECO:0007669"/>
    <property type="project" value="TreeGrafter"/>
</dbReference>
<dbReference type="GO" id="GO:0006096">
    <property type="term" value="P:glycolytic process"/>
    <property type="evidence" value="ECO:0007669"/>
    <property type="project" value="UniProtKB-UniRule"/>
</dbReference>
<dbReference type="CDD" id="cd05016">
    <property type="entry name" value="SIS_PGI_2"/>
    <property type="match status" value="1"/>
</dbReference>
<dbReference type="FunFam" id="3.40.50.10490:FF:000021">
    <property type="entry name" value="Glucose-6-phosphate isomerase"/>
    <property type="match status" value="1"/>
</dbReference>
<dbReference type="Gene3D" id="3.40.50.10490">
    <property type="entry name" value="Glucose-6-phosphate isomerase like protein, domain 1"/>
    <property type="match status" value="3"/>
</dbReference>
<dbReference type="HAMAP" id="MF_00473">
    <property type="entry name" value="G6P_isomerase"/>
    <property type="match status" value="1"/>
</dbReference>
<dbReference type="InterPro" id="IPR001672">
    <property type="entry name" value="G6P_Isomerase"/>
</dbReference>
<dbReference type="InterPro" id="IPR018189">
    <property type="entry name" value="Phosphoglucose_isomerase_CS"/>
</dbReference>
<dbReference type="InterPro" id="IPR046348">
    <property type="entry name" value="SIS_dom_sf"/>
</dbReference>
<dbReference type="InterPro" id="IPR035482">
    <property type="entry name" value="SIS_PGI_2"/>
</dbReference>
<dbReference type="NCBIfam" id="NF010696">
    <property type="entry name" value="PRK14096.1"/>
    <property type="match status" value="1"/>
</dbReference>
<dbReference type="PANTHER" id="PTHR11469">
    <property type="entry name" value="GLUCOSE-6-PHOSPHATE ISOMERASE"/>
    <property type="match status" value="1"/>
</dbReference>
<dbReference type="PANTHER" id="PTHR11469:SF1">
    <property type="entry name" value="GLUCOSE-6-PHOSPHATE ISOMERASE"/>
    <property type="match status" value="1"/>
</dbReference>
<dbReference type="Pfam" id="PF00342">
    <property type="entry name" value="PGI"/>
    <property type="match status" value="2"/>
</dbReference>
<dbReference type="PRINTS" id="PR00662">
    <property type="entry name" value="G6PISOMERASE"/>
</dbReference>
<dbReference type="SUPFAM" id="SSF53697">
    <property type="entry name" value="SIS domain"/>
    <property type="match status" value="1"/>
</dbReference>
<dbReference type="PROSITE" id="PS00174">
    <property type="entry name" value="P_GLUCOSE_ISOMERASE_2"/>
    <property type="match status" value="1"/>
</dbReference>
<dbReference type="PROSITE" id="PS51463">
    <property type="entry name" value="P_GLUCOSE_ISOMERASE_3"/>
    <property type="match status" value="1"/>
</dbReference>
<evidence type="ECO:0000255" key="1">
    <source>
        <dbReference type="HAMAP-Rule" id="MF_00473"/>
    </source>
</evidence>
<comment type="function">
    <text evidence="1">Catalyzes the reversible isomerization of glucose-6-phosphate to fructose-6-phosphate.</text>
</comment>
<comment type="catalytic activity">
    <reaction evidence="1">
        <text>alpha-D-glucose 6-phosphate = beta-D-fructose 6-phosphate</text>
        <dbReference type="Rhea" id="RHEA:11816"/>
        <dbReference type="ChEBI" id="CHEBI:57634"/>
        <dbReference type="ChEBI" id="CHEBI:58225"/>
        <dbReference type="EC" id="5.3.1.9"/>
    </reaction>
</comment>
<comment type="pathway">
    <text evidence="1">Carbohydrate biosynthesis; gluconeogenesis.</text>
</comment>
<comment type="pathway">
    <text evidence="1">Carbohydrate degradation; glycolysis; D-glyceraldehyde 3-phosphate and glycerone phosphate from D-glucose: step 2/4.</text>
</comment>
<comment type="subcellular location">
    <subcellularLocation>
        <location evidence="1">Cytoplasm</location>
    </subcellularLocation>
</comment>
<comment type="similarity">
    <text evidence="1">Belongs to the GPI family.</text>
</comment>
<protein>
    <recommendedName>
        <fullName evidence="1">Glucose-6-phosphate isomerase</fullName>
        <shortName evidence="1">GPI</shortName>
        <ecNumber evidence="1">5.3.1.9</ecNumber>
    </recommendedName>
    <alternativeName>
        <fullName evidence="1">Phosphoglucose isomerase</fullName>
        <shortName evidence="1">PGI</shortName>
    </alternativeName>
    <alternativeName>
        <fullName evidence="1">Phosphohexose isomerase</fullName>
        <shortName evidence="1">PHI</shortName>
    </alternativeName>
</protein>
<reference key="1">
    <citation type="journal article" date="2007" name="PLoS Genet.">
        <title>Patterns and implications of gene gain and loss in the evolution of Prochlorococcus.</title>
        <authorList>
            <person name="Kettler G.C."/>
            <person name="Martiny A.C."/>
            <person name="Huang K."/>
            <person name="Zucker J."/>
            <person name="Coleman M.L."/>
            <person name="Rodrigue S."/>
            <person name="Chen F."/>
            <person name="Lapidus A."/>
            <person name="Ferriera S."/>
            <person name="Johnson J."/>
            <person name="Steglich C."/>
            <person name="Church G.M."/>
            <person name="Richardson P."/>
            <person name="Chisholm S.W."/>
        </authorList>
    </citation>
    <scope>NUCLEOTIDE SEQUENCE [LARGE SCALE GENOMIC DNA]</scope>
    <source>
        <strain>MIT 9211</strain>
    </source>
</reference>
<feature type="chain" id="PRO_1000125743" description="Glucose-6-phosphate isomerase">
    <location>
        <begin position="1"/>
        <end position="532"/>
    </location>
</feature>
<feature type="active site" description="Proton donor" evidence="1">
    <location>
        <position position="330"/>
    </location>
</feature>
<feature type="active site" evidence="1">
    <location>
        <position position="359"/>
    </location>
</feature>
<feature type="active site" evidence="1">
    <location>
        <position position="460"/>
    </location>
</feature>
<gene>
    <name evidence="1" type="primary">pgi</name>
    <name type="ordered locus">P9211_08741</name>
</gene>
<name>G6PI_PROM4</name>